<organism>
    <name type="scientific">Homo sapiens</name>
    <name type="common">Human</name>
    <dbReference type="NCBI Taxonomy" id="9606"/>
    <lineage>
        <taxon>Eukaryota</taxon>
        <taxon>Metazoa</taxon>
        <taxon>Chordata</taxon>
        <taxon>Craniata</taxon>
        <taxon>Vertebrata</taxon>
        <taxon>Euteleostomi</taxon>
        <taxon>Mammalia</taxon>
        <taxon>Eutheria</taxon>
        <taxon>Euarchontoglires</taxon>
        <taxon>Primates</taxon>
        <taxon>Haplorrhini</taxon>
        <taxon>Catarrhini</taxon>
        <taxon>Hominidae</taxon>
        <taxon>Homo</taxon>
    </lineage>
</organism>
<accession>A1L0T0</accession>
<accession>O43341</accession>
<accession>Q96F08</accession>
<accession>Q99651</accession>
<accession>Q9BWN5</accession>
<accession>Q9UEB2</accession>
<sequence length="632" mass="67868">METPAAAAPAGSLFPSFLLLACGTLVAALLGAAHRLGLFYQLLHKVDKASVRHGGENVAAVLRAHGVRFIFTLVGGHISPLLVACEKLGIRVVDTRHEVTAVFAADAMARLSGTVGVAAVTAGPGLTNTVTAVKNAQMAQSPILLLGGAASTLLQNRGALQAVDQLSLFRPLCKFCVSVRRVRDIVPTLRAAMAAAQSGTPGPVFVELPVDVLYPYFMVQKEMVPAKPPKGLVGRVVSWYLENYLANLFAGAWEPQPEGPLPLDIPQASPQQVQRCVEILSRAKRPLMVLGSQALLTPTSADKLRAAVETLGVPCFLGGMARGLLGRNHPLHIRENRSAALKKADVIVLAGTVCDFRLSYGRVLSHSSKIIIVNRNREEMLLNSDIFWKPQEAVQGDVGSFVLKLVEGLQGQTWAPDWVEELREADRQKEQTFREKAAMPVAQHLNPVQVLQLVEETLPDNSILVVDGGDFVGTAAHLVQPRGPLRWLDPGAFGTLGVGAGFALGAKLCRPDAEVWCLFGDGAFGYSLIEFDTFVRHKIPVMALVGNDAGWTQISREQVPSLGSNVACGLAYTDYHKAAMGLGARGLLLSRENEDQVVKVLHDAQQQCRDGHPVVVNILIGRTDFRDGSIAV</sequence>
<comment type="function">
    <text evidence="5">Endoplasmic reticulum 2-OH acyl-CoA lyase involved in the cleavage (C1 removal) reaction in the fatty acid alpha-oxydation in a thiamine pyrophosphate (TPP)-dependent manner. Involved in the phytosphingosine degradation pathway.</text>
</comment>
<comment type="catalytic activity">
    <reaction evidence="5">
        <text>2-hydroxyoctadecanoyl-CoA = heptadecanal + formyl-CoA</text>
        <dbReference type="Rhea" id="RHEA:55196"/>
        <dbReference type="ChEBI" id="CHEBI:57376"/>
        <dbReference type="ChEBI" id="CHEBI:74116"/>
        <dbReference type="ChEBI" id="CHEBI:138631"/>
    </reaction>
    <physiologicalReaction direction="left-to-right" evidence="9">
        <dbReference type="Rhea" id="RHEA:55197"/>
    </physiologicalReaction>
</comment>
<comment type="catalytic activity">
    <reaction evidence="5">
        <text>(2R)-hydroxyhexadecanoyl-CoA = pentadecanal + formyl-CoA</text>
        <dbReference type="Rhea" id="RHEA:55212"/>
        <dbReference type="ChEBI" id="CHEBI:17302"/>
        <dbReference type="ChEBI" id="CHEBI:57376"/>
        <dbReference type="ChEBI" id="CHEBI:138654"/>
    </reaction>
    <physiologicalReaction direction="left-to-right" evidence="9">
        <dbReference type="Rhea" id="RHEA:55213"/>
    </physiologicalReaction>
</comment>
<comment type="cofactor">
    <cofactor evidence="2">
        <name>Mg(2+)</name>
        <dbReference type="ChEBI" id="CHEBI:18420"/>
    </cofactor>
    <text evidence="2">Binds 1 Mg(2+) ion per subunit.</text>
</comment>
<comment type="cofactor">
    <cofactor evidence="5">
        <name>thiamine diphosphate</name>
        <dbReference type="ChEBI" id="CHEBI:58937"/>
    </cofactor>
    <text evidence="2">Binds 1 thiamine pyrophosphate per subunit.</text>
</comment>
<comment type="interaction">
    <interactant intactId="EBI-720553">
        <id>A1L0T0</id>
    </interactant>
    <interactant intactId="EBI-742887">
        <id>Q8TAP6</id>
        <label>CEP76</label>
    </interactant>
    <organismsDiffer>false</organismsDiffer>
    <experiments>3</experiments>
</comment>
<comment type="subcellular location">
    <subcellularLocation>
        <location evidence="5">Endoplasmic reticulum membrane</location>
        <topology evidence="3">Single-pass membrane protein</topology>
    </subcellularLocation>
</comment>
<comment type="tissue specificity">
    <text evidence="5 6">Expressed in all tissues tested, with highest expression in heart, pancreas and placenta.</text>
</comment>
<comment type="similarity">
    <text evidence="8">Belongs to the TPP enzyme family.</text>
</comment>
<comment type="sequence caution" evidence="8">
    <conflict type="erroneous gene model prediction">
        <sequence resource="EMBL-CDS" id="AAC18916"/>
    </conflict>
</comment>
<comment type="sequence caution" evidence="8">
    <conflict type="miscellaneous discrepancy">
        <sequence resource="EMBL-CDS" id="AAH00109"/>
    </conflict>
    <text>Aberrant splicing.</text>
</comment>
<comment type="sequence caution" evidence="8">
    <conflict type="erroneous initiation">
        <sequence resource="EMBL-CDS" id="AAI26914"/>
    </conflict>
    <text>Truncated N-terminus.</text>
</comment>
<comment type="sequence caution" evidence="8">
    <conflict type="miscellaneous discrepancy">
        <sequence resource="EMBL-CDS" id="AAI26914"/>
    </conflict>
    <text>Sequence of unknown origin at the C-terminus.</text>
</comment>
<evidence type="ECO:0000250" key="1">
    <source>
        <dbReference type="UniProtKB" id="P40149"/>
    </source>
</evidence>
<evidence type="ECO:0000250" key="2">
    <source>
        <dbReference type="UniProtKB" id="Q8CHM7"/>
    </source>
</evidence>
<evidence type="ECO:0000255" key="3"/>
<evidence type="ECO:0000269" key="4">
    <source>
    </source>
</evidence>
<evidence type="ECO:0000269" key="5">
    <source>
    </source>
</evidence>
<evidence type="ECO:0000269" key="6">
    <source>
    </source>
</evidence>
<evidence type="ECO:0000303" key="7">
    <source>
    </source>
</evidence>
<evidence type="ECO:0000305" key="8"/>
<evidence type="ECO:0000305" key="9">
    <source>
    </source>
</evidence>
<evidence type="ECO:0000312" key="10">
    <source>
        <dbReference type="HGNC" id="HGNC:6041"/>
    </source>
</evidence>
<proteinExistence type="evidence at protein level"/>
<gene>
    <name evidence="10" type="primary">ILVBL</name>
    <name type="synonym">AHAS</name>
    <name evidence="7" type="synonym">HACL2</name>
</gene>
<keyword id="KW-0256">Endoplasmic reticulum</keyword>
<keyword id="KW-0276">Fatty acid metabolism</keyword>
<keyword id="KW-0443">Lipid metabolism</keyword>
<keyword id="KW-0456">Lyase</keyword>
<keyword id="KW-0460">Magnesium</keyword>
<keyword id="KW-0472">Membrane</keyword>
<keyword id="KW-0479">Metal-binding</keyword>
<keyword id="KW-1267">Proteomics identification</keyword>
<keyword id="KW-1185">Reference proteome</keyword>
<keyword id="KW-0786">Thiamine pyrophosphate</keyword>
<keyword id="KW-0812">Transmembrane</keyword>
<keyword id="KW-1133">Transmembrane helix</keyword>
<dbReference type="EC" id="4.1.2.-" evidence="5"/>
<dbReference type="EMBL" id="U61263">
    <property type="protein sequence ID" value="AAC50934.1"/>
    <property type="molecule type" value="mRNA"/>
</dbReference>
<dbReference type="EMBL" id="AC003956">
    <property type="protein sequence ID" value="AAB94632.1"/>
    <property type="molecule type" value="Genomic_DNA"/>
</dbReference>
<dbReference type="EMBL" id="AC004794">
    <property type="protein sequence ID" value="AAC18916.1"/>
    <property type="status" value="ALT_SEQ"/>
    <property type="molecule type" value="Genomic_DNA"/>
</dbReference>
<dbReference type="EMBL" id="CH471106">
    <property type="protein sequence ID" value="EAW84464.1"/>
    <property type="molecule type" value="Genomic_DNA"/>
</dbReference>
<dbReference type="EMBL" id="BC000109">
    <property type="protein sequence ID" value="AAH00109.1"/>
    <property type="status" value="ALT_SEQ"/>
    <property type="molecule type" value="mRNA"/>
</dbReference>
<dbReference type="EMBL" id="BC011722">
    <property type="protein sequence ID" value="AAH11722.1"/>
    <property type="molecule type" value="mRNA"/>
</dbReference>
<dbReference type="EMBL" id="BC011761">
    <property type="protein sequence ID" value="AAH11761.1"/>
    <property type="molecule type" value="mRNA"/>
</dbReference>
<dbReference type="EMBL" id="BC126913">
    <property type="protein sequence ID" value="AAI26914.1"/>
    <property type="status" value="ALT_SEQ"/>
    <property type="molecule type" value="mRNA"/>
</dbReference>
<dbReference type="CCDS" id="CCDS12325.1"/>
<dbReference type="RefSeq" id="NP_006835.2">
    <property type="nucleotide sequence ID" value="NM_006844.4"/>
</dbReference>
<dbReference type="RefSeq" id="XP_005259774.1">
    <property type="nucleotide sequence ID" value="XM_005259717.5"/>
</dbReference>
<dbReference type="RefSeq" id="XP_054175599.1">
    <property type="nucleotide sequence ID" value="XM_054319624.1"/>
</dbReference>
<dbReference type="SMR" id="A1L0T0"/>
<dbReference type="BioGRID" id="116190">
    <property type="interactions" value="217"/>
</dbReference>
<dbReference type="FunCoup" id="A1L0T0">
    <property type="interactions" value="856"/>
</dbReference>
<dbReference type="IntAct" id="A1L0T0">
    <property type="interactions" value="119"/>
</dbReference>
<dbReference type="MINT" id="A1L0T0"/>
<dbReference type="STRING" id="9606.ENSP00000263383"/>
<dbReference type="SwissLipids" id="SLP:000001821"/>
<dbReference type="GlyCosmos" id="A1L0T0">
    <property type="glycosylation" value="1 site, 1 glycan"/>
</dbReference>
<dbReference type="GlyGen" id="A1L0T0">
    <property type="glycosylation" value="2 sites, 1 O-linked glycan (1 site)"/>
</dbReference>
<dbReference type="iPTMnet" id="A1L0T0"/>
<dbReference type="PhosphoSitePlus" id="A1L0T0"/>
<dbReference type="SwissPalm" id="A1L0T0"/>
<dbReference type="BioMuta" id="ILVBL"/>
<dbReference type="jPOST" id="A1L0T0"/>
<dbReference type="MassIVE" id="A1L0T0"/>
<dbReference type="PaxDb" id="9606-ENSP00000263383"/>
<dbReference type="PeptideAtlas" id="A1L0T0"/>
<dbReference type="ProteomicsDB" id="129"/>
<dbReference type="Pumba" id="A1L0T0"/>
<dbReference type="TopDownProteomics" id="A1L0T0"/>
<dbReference type="Antibodypedia" id="26957">
    <property type="antibodies" value="333 antibodies from 21 providers"/>
</dbReference>
<dbReference type="DNASU" id="10994"/>
<dbReference type="Ensembl" id="ENST00000263383.8">
    <property type="protein sequence ID" value="ENSP00000263383.3"/>
    <property type="gene ID" value="ENSG00000105135.16"/>
</dbReference>
<dbReference type="GeneID" id="10994"/>
<dbReference type="KEGG" id="hsa:10994"/>
<dbReference type="MANE-Select" id="ENST00000263383.8">
    <property type="protein sequence ID" value="ENSP00000263383.3"/>
    <property type="RefSeq nucleotide sequence ID" value="NM_006844.5"/>
    <property type="RefSeq protein sequence ID" value="NP_006835.2"/>
</dbReference>
<dbReference type="UCSC" id="uc002nam.5">
    <property type="organism name" value="human"/>
</dbReference>
<dbReference type="AGR" id="HGNC:6041"/>
<dbReference type="CTD" id="10994"/>
<dbReference type="DisGeNET" id="10994"/>
<dbReference type="GeneCards" id="ILVBL"/>
<dbReference type="HGNC" id="HGNC:6041">
    <property type="gene designation" value="ILVBL"/>
</dbReference>
<dbReference type="HPA" id="ENSG00000105135">
    <property type="expression patterns" value="Low tissue specificity"/>
</dbReference>
<dbReference type="MIM" id="605770">
    <property type="type" value="gene"/>
</dbReference>
<dbReference type="neXtProt" id="NX_A1L0T0"/>
<dbReference type="OpenTargets" id="ENSG00000105135"/>
<dbReference type="PharmGKB" id="PA29857"/>
<dbReference type="VEuPathDB" id="HostDB:ENSG00000105135"/>
<dbReference type="eggNOG" id="KOG1185">
    <property type="taxonomic scope" value="Eukaryota"/>
</dbReference>
<dbReference type="GeneTree" id="ENSGT00940000158035"/>
<dbReference type="HOGENOM" id="CLU_013748_3_3_1"/>
<dbReference type="InParanoid" id="A1L0T0"/>
<dbReference type="OMA" id="QETDMIG"/>
<dbReference type="OrthoDB" id="16262at2759"/>
<dbReference type="PAN-GO" id="A1L0T0">
    <property type="GO annotations" value="5 GO annotations based on evolutionary models"/>
</dbReference>
<dbReference type="PhylomeDB" id="A1L0T0"/>
<dbReference type="TreeFam" id="TF354221"/>
<dbReference type="PathwayCommons" id="A1L0T0"/>
<dbReference type="SignaLink" id="A1L0T0"/>
<dbReference type="BioGRID-ORCS" id="10994">
    <property type="hits" value="16 hits in 1160 CRISPR screens"/>
</dbReference>
<dbReference type="ChiTaRS" id="ILVBL">
    <property type="organism name" value="human"/>
</dbReference>
<dbReference type="GenomeRNAi" id="10994"/>
<dbReference type="Pharos" id="A1L0T0">
    <property type="development level" value="Tbio"/>
</dbReference>
<dbReference type="PRO" id="PR:A1L0T0"/>
<dbReference type="Proteomes" id="UP000005640">
    <property type="component" value="Chromosome 19"/>
</dbReference>
<dbReference type="RNAct" id="A1L0T0">
    <property type="molecule type" value="protein"/>
</dbReference>
<dbReference type="Bgee" id="ENSG00000105135">
    <property type="expression patterns" value="Expressed in apex of heart and 193 other cell types or tissues"/>
</dbReference>
<dbReference type="ExpressionAtlas" id="A1L0T0">
    <property type="expression patterns" value="baseline and differential"/>
</dbReference>
<dbReference type="GO" id="GO:0005948">
    <property type="term" value="C:acetolactate synthase complex"/>
    <property type="evidence" value="ECO:0000318"/>
    <property type="project" value="GO_Central"/>
</dbReference>
<dbReference type="GO" id="GO:0005789">
    <property type="term" value="C:endoplasmic reticulum membrane"/>
    <property type="evidence" value="ECO:0000314"/>
    <property type="project" value="UniProtKB"/>
</dbReference>
<dbReference type="GO" id="GO:0016020">
    <property type="term" value="C:membrane"/>
    <property type="evidence" value="ECO:0007005"/>
    <property type="project" value="UniProtKB"/>
</dbReference>
<dbReference type="GO" id="GO:0003984">
    <property type="term" value="F:acetolactate synthase activity"/>
    <property type="evidence" value="ECO:0000318"/>
    <property type="project" value="GO_Central"/>
</dbReference>
<dbReference type="GO" id="GO:0050660">
    <property type="term" value="F:flavin adenine dinucleotide binding"/>
    <property type="evidence" value="ECO:0000318"/>
    <property type="project" value="GO_Central"/>
</dbReference>
<dbReference type="GO" id="GO:0016829">
    <property type="term" value="F:lyase activity"/>
    <property type="evidence" value="ECO:0007669"/>
    <property type="project" value="UniProtKB-KW"/>
</dbReference>
<dbReference type="GO" id="GO:0000287">
    <property type="term" value="F:magnesium ion binding"/>
    <property type="evidence" value="ECO:0007669"/>
    <property type="project" value="InterPro"/>
</dbReference>
<dbReference type="GO" id="GO:0030976">
    <property type="term" value="F:thiamine pyrophosphate binding"/>
    <property type="evidence" value="ECO:0007669"/>
    <property type="project" value="InterPro"/>
</dbReference>
<dbReference type="GO" id="GO:0001561">
    <property type="term" value="P:fatty acid alpha-oxidation"/>
    <property type="evidence" value="ECO:0000314"/>
    <property type="project" value="UniProtKB"/>
</dbReference>
<dbReference type="GO" id="GO:0009097">
    <property type="term" value="P:isoleucine biosynthetic process"/>
    <property type="evidence" value="ECO:0000318"/>
    <property type="project" value="GO_Central"/>
</dbReference>
<dbReference type="GO" id="GO:0009099">
    <property type="term" value="P:L-valine biosynthetic process"/>
    <property type="evidence" value="ECO:0000318"/>
    <property type="project" value="GO_Central"/>
</dbReference>
<dbReference type="CDD" id="cd02004">
    <property type="entry name" value="TPP_BZL_OCoD_HPCL"/>
    <property type="match status" value="1"/>
</dbReference>
<dbReference type="CDD" id="cd07035">
    <property type="entry name" value="TPP_PYR_POX_like"/>
    <property type="match status" value="1"/>
</dbReference>
<dbReference type="FunFam" id="3.40.50.1220:FF:000021">
    <property type="entry name" value="IlvB (bacterial acetolactate synthase)-like"/>
    <property type="match status" value="1"/>
</dbReference>
<dbReference type="FunFam" id="3.40.50.970:FF:000048">
    <property type="entry name" value="IlvB (bacterial acetolactate synthase)-like"/>
    <property type="match status" value="1"/>
</dbReference>
<dbReference type="FunFam" id="3.40.50.970:FF:000043">
    <property type="entry name" value="IlvB acetolactate synthase like"/>
    <property type="match status" value="1"/>
</dbReference>
<dbReference type="Gene3D" id="3.40.50.970">
    <property type="match status" value="2"/>
</dbReference>
<dbReference type="Gene3D" id="3.40.50.1220">
    <property type="entry name" value="TPP-binding domain"/>
    <property type="match status" value="1"/>
</dbReference>
<dbReference type="InterPro" id="IPR029035">
    <property type="entry name" value="DHS-like_NAD/FAD-binding_dom"/>
</dbReference>
<dbReference type="InterPro" id="IPR029061">
    <property type="entry name" value="THDP-binding"/>
</dbReference>
<dbReference type="InterPro" id="IPR012000">
    <property type="entry name" value="Thiamin_PyroP_enz_cen_dom"/>
</dbReference>
<dbReference type="InterPro" id="IPR012001">
    <property type="entry name" value="Thiamin_PyroP_enz_TPP-bd_dom"/>
</dbReference>
<dbReference type="InterPro" id="IPR000399">
    <property type="entry name" value="TPP-bd_CS"/>
</dbReference>
<dbReference type="InterPro" id="IPR045229">
    <property type="entry name" value="TPP_enz"/>
</dbReference>
<dbReference type="InterPro" id="IPR011766">
    <property type="entry name" value="TPP_enzyme_TPP-bd"/>
</dbReference>
<dbReference type="PANTHER" id="PTHR18968:SF166">
    <property type="entry name" value="2-HYDROXYACYL-COA LYASE 2"/>
    <property type="match status" value="1"/>
</dbReference>
<dbReference type="PANTHER" id="PTHR18968">
    <property type="entry name" value="THIAMINE PYROPHOSPHATE ENZYMES"/>
    <property type="match status" value="1"/>
</dbReference>
<dbReference type="Pfam" id="PF02775">
    <property type="entry name" value="TPP_enzyme_C"/>
    <property type="match status" value="1"/>
</dbReference>
<dbReference type="Pfam" id="PF00205">
    <property type="entry name" value="TPP_enzyme_M"/>
    <property type="match status" value="1"/>
</dbReference>
<dbReference type="Pfam" id="PF02776">
    <property type="entry name" value="TPP_enzyme_N"/>
    <property type="match status" value="1"/>
</dbReference>
<dbReference type="SUPFAM" id="SSF52467">
    <property type="entry name" value="DHS-like NAD/FAD-binding domain"/>
    <property type="match status" value="1"/>
</dbReference>
<dbReference type="SUPFAM" id="SSF52518">
    <property type="entry name" value="Thiamin diphosphate-binding fold (THDP-binding)"/>
    <property type="match status" value="2"/>
</dbReference>
<dbReference type="PROSITE" id="PS00187">
    <property type="entry name" value="TPP_ENZYMES"/>
    <property type="match status" value="1"/>
</dbReference>
<protein>
    <recommendedName>
        <fullName evidence="7">2-hydroxyacyl-CoA lyase 2</fullName>
        <ecNumber evidence="5">4.1.2.-</ecNumber>
    </recommendedName>
    <alternativeName>
        <fullName>Acetolactate synthase-like protein</fullName>
    </alternativeName>
    <alternativeName>
        <fullName>IlvB-like protein</fullName>
    </alternativeName>
</protein>
<feature type="chain" id="PRO_0000314825" description="2-hydroxyacyl-CoA lyase 2">
    <location>
        <begin position="1"/>
        <end position="632"/>
    </location>
</feature>
<feature type="transmembrane region" description="Helical" evidence="3">
    <location>
        <begin position="13"/>
        <end position="33"/>
    </location>
</feature>
<feature type="region of interest" description="Thiamine pyrophosphate binding" evidence="1">
    <location>
        <begin position="470"/>
        <end position="550"/>
    </location>
</feature>
<feature type="binding site" evidence="1">
    <location>
        <position position="98"/>
    </location>
    <ligand>
        <name>thiamine diphosphate</name>
        <dbReference type="ChEBI" id="CHEBI:58937"/>
    </ligand>
</feature>
<feature type="binding site" evidence="1">
    <location>
        <position position="521"/>
    </location>
    <ligand>
        <name>Mg(2+)</name>
        <dbReference type="ChEBI" id="CHEBI:18420"/>
    </ligand>
</feature>
<feature type="binding site" evidence="1">
    <location>
        <position position="547"/>
    </location>
    <ligand>
        <name>Mg(2+)</name>
        <dbReference type="ChEBI" id="CHEBI:18420"/>
    </ligand>
</feature>
<feature type="sequence variant" id="VAR_038064" description="In dbSNP:rs17856373." evidence="4">
    <original>N</original>
    <variation>D</variation>
    <location>
        <position position="374"/>
    </location>
</feature>
<feature type="sequence variant" id="VAR_061901" description="In dbSNP:rs35548653.">
    <original>R</original>
    <variation>Q</variation>
    <location>
        <position position="510"/>
    </location>
</feature>
<reference key="1">
    <citation type="journal article" date="1996" name="Genomics">
        <title>A human homolog of bacterial acetolactate synthase genes maps within the CADASIL critical region.</title>
        <authorList>
            <person name="Joutel A."/>
            <person name="Ducros A."/>
            <person name="Alamowitch S."/>
            <person name="Cruaud C."/>
            <person name="Domenga V."/>
            <person name="Marechal E."/>
            <person name="Vahedi K."/>
            <person name="Chabriat H."/>
            <person name="Bousser M.G."/>
            <person name="Tournier-Lasserve E."/>
        </authorList>
    </citation>
    <scope>NUCLEOTIDE SEQUENCE [MRNA]</scope>
    <scope>TISSUE SPECIFICITY</scope>
    <source>
        <tissue>Fetal brain</tissue>
    </source>
</reference>
<reference key="2">
    <citation type="journal article" date="2004" name="Nature">
        <title>The DNA sequence and biology of human chromosome 19.</title>
        <authorList>
            <person name="Grimwood J."/>
            <person name="Gordon L.A."/>
            <person name="Olsen A.S."/>
            <person name="Terry A."/>
            <person name="Schmutz J."/>
            <person name="Lamerdin J.E."/>
            <person name="Hellsten U."/>
            <person name="Goodstein D."/>
            <person name="Couronne O."/>
            <person name="Tran-Gyamfi M."/>
            <person name="Aerts A."/>
            <person name="Altherr M."/>
            <person name="Ashworth L."/>
            <person name="Bajorek E."/>
            <person name="Black S."/>
            <person name="Branscomb E."/>
            <person name="Caenepeel S."/>
            <person name="Carrano A.V."/>
            <person name="Caoile C."/>
            <person name="Chan Y.M."/>
            <person name="Christensen M."/>
            <person name="Cleland C.A."/>
            <person name="Copeland A."/>
            <person name="Dalin E."/>
            <person name="Dehal P."/>
            <person name="Denys M."/>
            <person name="Detter J.C."/>
            <person name="Escobar J."/>
            <person name="Flowers D."/>
            <person name="Fotopulos D."/>
            <person name="Garcia C."/>
            <person name="Georgescu A.M."/>
            <person name="Glavina T."/>
            <person name="Gomez M."/>
            <person name="Gonzales E."/>
            <person name="Groza M."/>
            <person name="Hammon N."/>
            <person name="Hawkins T."/>
            <person name="Haydu L."/>
            <person name="Ho I."/>
            <person name="Huang W."/>
            <person name="Israni S."/>
            <person name="Jett J."/>
            <person name="Kadner K."/>
            <person name="Kimball H."/>
            <person name="Kobayashi A."/>
            <person name="Larionov V."/>
            <person name="Leem S.-H."/>
            <person name="Lopez F."/>
            <person name="Lou Y."/>
            <person name="Lowry S."/>
            <person name="Malfatti S."/>
            <person name="Martinez D."/>
            <person name="McCready P.M."/>
            <person name="Medina C."/>
            <person name="Morgan J."/>
            <person name="Nelson K."/>
            <person name="Nolan M."/>
            <person name="Ovcharenko I."/>
            <person name="Pitluck S."/>
            <person name="Pollard M."/>
            <person name="Popkie A.P."/>
            <person name="Predki P."/>
            <person name="Quan G."/>
            <person name="Ramirez L."/>
            <person name="Rash S."/>
            <person name="Retterer J."/>
            <person name="Rodriguez A."/>
            <person name="Rogers S."/>
            <person name="Salamov A."/>
            <person name="Salazar A."/>
            <person name="She X."/>
            <person name="Smith D."/>
            <person name="Slezak T."/>
            <person name="Solovyev V."/>
            <person name="Thayer N."/>
            <person name="Tice H."/>
            <person name="Tsai M."/>
            <person name="Ustaszewska A."/>
            <person name="Vo N."/>
            <person name="Wagner M."/>
            <person name="Wheeler J."/>
            <person name="Wu K."/>
            <person name="Xie G."/>
            <person name="Yang J."/>
            <person name="Dubchak I."/>
            <person name="Furey T.S."/>
            <person name="DeJong P."/>
            <person name="Dickson M."/>
            <person name="Gordon D."/>
            <person name="Eichler E.E."/>
            <person name="Pennacchio L.A."/>
            <person name="Richardson P."/>
            <person name="Stubbs L."/>
            <person name="Rokhsar D.S."/>
            <person name="Myers R.M."/>
            <person name="Rubin E.M."/>
            <person name="Lucas S.M."/>
        </authorList>
    </citation>
    <scope>NUCLEOTIDE SEQUENCE [LARGE SCALE GENOMIC DNA]</scope>
</reference>
<reference key="3">
    <citation type="submission" date="2005-07" db="EMBL/GenBank/DDBJ databases">
        <authorList>
            <person name="Mural R.J."/>
            <person name="Istrail S."/>
            <person name="Sutton G.G."/>
            <person name="Florea L."/>
            <person name="Halpern A.L."/>
            <person name="Mobarry C.M."/>
            <person name="Lippert R."/>
            <person name="Walenz B."/>
            <person name="Shatkay H."/>
            <person name="Dew I."/>
            <person name="Miller J.R."/>
            <person name="Flanigan M.J."/>
            <person name="Edwards N.J."/>
            <person name="Bolanos R."/>
            <person name="Fasulo D."/>
            <person name="Halldorsson B.V."/>
            <person name="Hannenhalli S."/>
            <person name="Turner R."/>
            <person name="Yooseph S."/>
            <person name="Lu F."/>
            <person name="Nusskern D.R."/>
            <person name="Shue B.C."/>
            <person name="Zheng X.H."/>
            <person name="Zhong F."/>
            <person name="Delcher A.L."/>
            <person name="Huson D.H."/>
            <person name="Kravitz S.A."/>
            <person name="Mouchard L."/>
            <person name="Reinert K."/>
            <person name="Remington K.A."/>
            <person name="Clark A.G."/>
            <person name="Waterman M.S."/>
            <person name="Eichler E.E."/>
            <person name="Adams M.D."/>
            <person name="Hunkapiller M.W."/>
            <person name="Myers E.W."/>
            <person name="Venter J.C."/>
        </authorList>
    </citation>
    <scope>NUCLEOTIDE SEQUENCE [LARGE SCALE GENOMIC DNA]</scope>
</reference>
<reference key="4">
    <citation type="journal article" date="2004" name="Genome Res.">
        <title>The status, quality, and expansion of the NIH full-length cDNA project: the Mammalian Gene Collection (MGC).</title>
        <authorList>
            <consortium name="The MGC Project Team"/>
        </authorList>
    </citation>
    <scope>NUCLEOTIDE SEQUENCE [LARGE SCALE MRNA]</scope>
    <scope>VARIANT ASP-374</scope>
    <source>
        <tissue>Pancreas</tissue>
        <tissue>Placenta</tissue>
    </source>
</reference>
<reference key="5">
    <citation type="journal article" date="2011" name="BMC Syst. Biol.">
        <title>Initial characterization of the human central proteome.</title>
        <authorList>
            <person name="Burkard T.R."/>
            <person name="Planyavsky M."/>
            <person name="Kaupe I."/>
            <person name="Breitwieser F.P."/>
            <person name="Buerckstuemmer T."/>
            <person name="Bennett K.L."/>
            <person name="Superti-Furga G."/>
            <person name="Colinge J."/>
        </authorList>
    </citation>
    <scope>IDENTIFICATION BY MASS SPECTROMETRY [LARGE SCALE ANALYSIS]</scope>
</reference>
<reference key="6">
    <citation type="journal article" date="2015" name="Proteomics">
        <title>N-terminome analysis of the human mitochondrial proteome.</title>
        <authorList>
            <person name="Vaca Jacome A.S."/>
            <person name="Rabilloud T."/>
            <person name="Schaeffer-Reiss C."/>
            <person name="Rompais M."/>
            <person name="Ayoub D."/>
            <person name="Lane L."/>
            <person name="Bairoch A."/>
            <person name="Van Dorsselaer A."/>
            <person name="Carapito C."/>
        </authorList>
    </citation>
    <scope>IDENTIFICATION BY MASS SPECTROMETRY [LARGE SCALE ANALYSIS]</scope>
</reference>
<reference key="7">
    <citation type="journal article" date="2017" name="Proc. Natl. Acad. Sci. U.S.A.">
        <title>Phytosphingosine degradation pathway includes fatty acid alpha-oxidation reactions in the endoplasmic reticulum.</title>
        <authorList>
            <person name="Kitamura T."/>
            <person name="Seki N."/>
            <person name="Kihara A."/>
        </authorList>
    </citation>
    <scope>SUBCELLULAR LOCATION</scope>
    <scope>FUNCTION</scope>
    <scope>CATALYTIC ACTIVITY</scope>
    <scope>COFACTOR</scope>
    <scope>TISSUE SPECIFICITY</scope>
</reference>
<name>HACL2_HUMAN</name>